<evidence type="ECO:0000255" key="1">
    <source>
        <dbReference type="HAMAP-Rule" id="MF_00366"/>
    </source>
</evidence>
<accession>A5G6A4</accession>
<gene>
    <name evidence="1" type="primary">rpoZ</name>
    <name type="ordered locus">Gura_3161</name>
</gene>
<comment type="function">
    <text evidence="1">Promotes RNA polymerase assembly. Latches the N- and C-terminal regions of the beta' subunit thereby facilitating its interaction with the beta and alpha subunits.</text>
</comment>
<comment type="catalytic activity">
    <reaction evidence="1">
        <text>RNA(n) + a ribonucleoside 5'-triphosphate = RNA(n+1) + diphosphate</text>
        <dbReference type="Rhea" id="RHEA:21248"/>
        <dbReference type="Rhea" id="RHEA-COMP:14527"/>
        <dbReference type="Rhea" id="RHEA-COMP:17342"/>
        <dbReference type="ChEBI" id="CHEBI:33019"/>
        <dbReference type="ChEBI" id="CHEBI:61557"/>
        <dbReference type="ChEBI" id="CHEBI:140395"/>
        <dbReference type="EC" id="2.7.7.6"/>
    </reaction>
</comment>
<comment type="subunit">
    <text evidence="1">The RNAP catalytic core consists of 2 alpha, 1 beta, 1 beta' and 1 omega subunit. When a sigma factor is associated with the core the holoenzyme is formed, which can initiate transcription.</text>
</comment>
<comment type="similarity">
    <text evidence="1">Belongs to the RNA polymerase subunit omega family.</text>
</comment>
<keyword id="KW-0240">DNA-directed RNA polymerase</keyword>
<keyword id="KW-0548">Nucleotidyltransferase</keyword>
<keyword id="KW-1185">Reference proteome</keyword>
<keyword id="KW-0804">Transcription</keyword>
<keyword id="KW-0808">Transferase</keyword>
<protein>
    <recommendedName>
        <fullName evidence="1">DNA-directed RNA polymerase subunit omega</fullName>
        <shortName evidence="1">RNAP omega subunit</shortName>
        <ecNumber evidence="1">2.7.7.6</ecNumber>
    </recommendedName>
    <alternativeName>
        <fullName evidence="1">RNA polymerase omega subunit</fullName>
    </alternativeName>
    <alternativeName>
        <fullName evidence="1">Transcriptase subunit omega</fullName>
    </alternativeName>
</protein>
<dbReference type="EC" id="2.7.7.6" evidence="1"/>
<dbReference type="EMBL" id="CP000698">
    <property type="protein sequence ID" value="ABQ27322.1"/>
    <property type="molecule type" value="Genomic_DNA"/>
</dbReference>
<dbReference type="RefSeq" id="WP_011939988.1">
    <property type="nucleotide sequence ID" value="NC_009483.1"/>
</dbReference>
<dbReference type="SMR" id="A5G6A4"/>
<dbReference type="STRING" id="351605.Gura_3161"/>
<dbReference type="KEGG" id="gur:Gura_3161"/>
<dbReference type="HOGENOM" id="CLU_125406_5_1_7"/>
<dbReference type="OrthoDB" id="9796300at2"/>
<dbReference type="Proteomes" id="UP000006695">
    <property type="component" value="Chromosome"/>
</dbReference>
<dbReference type="GO" id="GO:0000428">
    <property type="term" value="C:DNA-directed RNA polymerase complex"/>
    <property type="evidence" value="ECO:0007669"/>
    <property type="project" value="UniProtKB-KW"/>
</dbReference>
<dbReference type="GO" id="GO:0003677">
    <property type="term" value="F:DNA binding"/>
    <property type="evidence" value="ECO:0007669"/>
    <property type="project" value="UniProtKB-UniRule"/>
</dbReference>
<dbReference type="GO" id="GO:0003899">
    <property type="term" value="F:DNA-directed RNA polymerase activity"/>
    <property type="evidence" value="ECO:0007669"/>
    <property type="project" value="UniProtKB-UniRule"/>
</dbReference>
<dbReference type="GO" id="GO:0006351">
    <property type="term" value="P:DNA-templated transcription"/>
    <property type="evidence" value="ECO:0007669"/>
    <property type="project" value="UniProtKB-UniRule"/>
</dbReference>
<dbReference type="Gene3D" id="3.90.940.10">
    <property type="match status" value="1"/>
</dbReference>
<dbReference type="HAMAP" id="MF_00366">
    <property type="entry name" value="RNApol_bact_RpoZ"/>
    <property type="match status" value="1"/>
</dbReference>
<dbReference type="InterPro" id="IPR003716">
    <property type="entry name" value="DNA-dir_RNA_pol_omega"/>
</dbReference>
<dbReference type="InterPro" id="IPR006110">
    <property type="entry name" value="Pol_omega/Rpo6/RPB6"/>
</dbReference>
<dbReference type="InterPro" id="IPR036161">
    <property type="entry name" value="RPB6/omega-like_sf"/>
</dbReference>
<dbReference type="NCBIfam" id="TIGR00690">
    <property type="entry name" value="rpoZ"/>
    <property type="match status" value="1"/>
</dbReference>
<dbReference type="PANTHER" id="PTHR34476">
    <property type="entry name" value="DNA-DIRECTED RNA POLYMERASE SUBUNIT OMEGA"/>
    <property type="match status" value="1"/>
</dbReference>
<dbReference type="PANTHER" id="PTHR34476:SF1">
    <property type="entry name" value="DNA-DIRECTED RNA POLYMERASE SUBUNIT OMEGA"/>
    <property type="match status" value="1"/>
</dbReference>
<dbReference type="Pfam" id="PF01192">
    <property type="entry name" value="RNA_pol_Rpb6"/>
    <property type="match status" value="1"/>
</dbReference>
<dbReference type="SMART" id="SM01409">
    <property type="entry name" value="RNA_pol_Rpb6"/>
    <property type="match status" value="1"/>
</dbReference>
<dbReference type="SUPFAM" id="SSF63562">
    <property type="entry name" value="RPB6/omega subunit-like"/>
    <property type="match status" value="1"/>
</dbReference>
<feature type="chain" id="PRO_1000079630" description="DNA-directed RNA polymerase subunit omega">
    <location>
        <begin position="1"/>
        <end position="69"/>
    </location>
</feature>
<organism>
    <name type="scientific">Geotalea uraniireducens (strain Rf4)</name>
    <name type="common">Geobacter uraniireducens</name>
    <dbReference type="NCBI Taxonomy" id="351605"/>
    <lineage>
        <taxon>Bacteria</taxon>
        <taxon>Pseudomonadati</taxon>
        <taxon>Thermodesulfobacteriota</taxon>
        <taxon>Desulfuromonadia</taxon>
        <taxon>Geobacterales</taxon>
        <taxon>Geobacteraceae</taxon>
        <taxon>Geotalea</taxon>
    </lineage>
</organism>
<name>RPOZ_GEOUR</name>
<proteinExistence type="inferred from homology"/>
<sequence>MARVTVEDCLEKVDNRFLLVMLASKRVKQLFKGAKPLIDNRAGNKNVVLALREIAAGKVNFEISGRKSR</sequence>
<reference key="1">
    <citation type="submission" date="2007-05" db="EMBL/GenBank/DDBJ databases">
        <title>Complete sequence of Geobacter uraniireducens Rf4.</title>
        <authorList>
            <consortium name="US DOE Joint Genome Institute"/>
            <person name="Copeland A."/>
            <person name="Lucas S."/>
            <person name="Lapidus A."/>
            <person name="Barry K."/>
            <person name="Detter J.C."/>
            <person name="Glavina del Rio T."/>
            <person name="Hammon N."/>
            <person name="Israni S."/>
            <person name="Dalin E."/>
            <person name="Tice H."/>
            <person name="Pitluck S."/>
            <person name="Chertkov O."/>
            <person name="Brettin T."/>
            <person name="Bruce D."/>
            <person name="Han C."/>
            <person name="Schmutz J."/>
            <person name="Larimer F."/>
            <person name="Land M."/>
            <person name="Hauser L."/>
            <person name="Kyrpides N."/>
            <person name="Mikhailova N."/>
            <person name="Shelobolina E."/>
            <person name="Aklujkar M."/>
            <person name="Lovley D."/>
            <person name="Richardson P."/>
        </authorList>
    </citation>
    <scope>NUCLEOTIDE SEQUENCE [LARGE SCALE GENOMIC DNA]</scope>
    <source>
        <strain>ATCC BAA-1134 / JCM 13001 / Rf4</strain>
    </source>
</reference>